<feature type="chain" id="PRO_1000214258" description="Small ribosomal subunit protein uS8">
    <location>
        <begin position="1"/>
        <end position="132"/>
    </location>
</feature>
<protein>
    <recommendedName>
        <fullName evidence="1">Small ribosomal subunit protein uS8</fullName>
    </recommendedName>
    <alternativeName>
        <fullName evidence="2">30S ribosomal protein S8</fullName>
    </alternativeName>
</protein>
<gene>
    <name evidence="1" type="primary">rpsH</name>
    <name type="ordered locus">Mlut_17030</name>
</gene>
<organism>
    <name type="scientific">Micrococcus luteus (strain ATCC 4698 / DSM 20030 / JCM 1464 / CCM 169 / CCUG 5858 / IAM 1056 / NBRC 3333 / NCIMB 9278 / NCTC 2665 / VKM Ac-2230)</name>
    <name type="common">Micrococcus lysodeikticus</name>
    <dbReference type="NCBI Taxonomy" id="465515"/>
    <lineage>
        <taxon>Bacteria</taxon>
        <taxon>Bacillati</taxon>
        <taxon>Actinomycetota</taxon>
        <taxon>Actinomycetes</taxon>
        <taxon>Micrococcales</taxon>
        <taxon>Micrococcaceae</taxon>
        <taxon>Micrococcus</taxon>
    </lineage>
</organism>
<evidence type="ECO:0000255" key="1">
    <source>
        <dbReference type="HAMAP-Rule" id="MF_01302"/>
    </source>
</evidence>
<evidence type="ECO:0000305" key="2"/>
<keyword id="KW-1185">Reference proteome</keyword>
<keyword id="KW-0687">Ribonucleoprotein</keyword>
<keyword id="KW-0689">Ribosomal protein</keyword>
<keyword id="KW-0694">RNA-binding</keyword>
<keyword id="KW-0699">rRNA-binding</keyword>
<name>RS8_MICLC</name>
<proteinExistence type="inferred from homology"/>
<reference key="1">
    <citation type="journal article" date="2010" name="J. Bacteriol.">
        <title>Genome sequence of the Fleming strain of Micrococcus luteus, a simple free-living actinobacterium.</title>
        <authorList>
            <person name="Young M."/>
            <person name="Artsatbanov V."/>
            <person name="Beller H.R."/>
            <person name="Chandra G."/>
            <person name="Chater K.F."/>
            <person name="Dover L.G."/>
            <person name="Goh E.B."/>
            <person name="Kahan T."/>
            <person name="Kaprelyants A.S."/>
            <person name="Kyrpides N."/>
            <person name="Lapidus A."/>
            <person name="Lowry S.R."/>
            <person name="Lykidis A."/>
            <person name="Mahillon J."/>
            <person name="Markowitz V."/>
            <person name="Mavromatis K."/>
            <person name="Mukamolova G.V."/>
            <person name="Oren A."/>
            <person name="Rokem J.S."/>
            <person name="Smith M.C."/>
            <person name="Young D.I."/>
            <person name="Greenblatt C.L."/>
        </authorList>
    </citation>
    <scope>NUCLEOTIDE SEQUENCE [LARGE SCALE GENOMIC DNA]</scope>
    <source>
        <strain>ATCC 4698 / DSM 20030 / JCM 1464 / CCM 169 / CCUG 5858 / IAM 1056 / NBRC 3333 / NCIMB 9278 / NCTC 2665 / VKM Ac-2230</strain>
    </source>
</reference>
<accession>C5CC49</accession>
<dbReference type="EMBL" id="CP001628">
    <property type="protein sequence ID" value="ACS31190.1"/>
    <property type="molecule type" value="Genomic_DNA"/>
</dbReference>
<dbReference type="RefSeq" id="WP_002857494.1">
    <property type="nucleotide sequence ID" value="NZ_WBMF01000001.1"/>
</dbReference>
<dbReference type="SMR" id="C5CC49"/>
<dbReference type="STRING" id="465515.Mlut_17030"/>
<dbReference type="EnsemblBacteria" id="ACS31190">
    <property type="protein sequence ID" value="ACS31190"/>
    <property type="gene ID" value="Mlut_17030"/>
</dbReference>
<dbReference type="GeneID" id="93364283"/>
<dbReference type="KEGG" id="mlu:Mlut_17030"/>
<dbReference type="eggNOG" id="COG0096">
    <property type="taxonomic scope" value="Bacteria"/>
</dbReference>
<dbReference type="HOGENOM" id="CLU_098428_0_1_11"/>
<dbReference type="Proteomes" id="UP000000738">
    <property type="component" value="Chromosome"/>
</dbReference>
<dbReference type="GO" id="GO:1990904">
    <property type="term" value="C:ribonucleoprotein complex"/>
    <property type="evidence" value="ECO:0007669"/>
    <property type="project" value="UniProtKB-KW"/>
</dbReference>
<dbReference type="GO" id="GO:0005840">
    <property type="term" value="C:ribosome"/>
    <property type="evidence" value="ECO:0007669"/>
    <property type="project" value="UniProtKB-KW"/>
</dbReference>
<dbReference type="GO" id="GO:0019843">
    <property type="term" value="F:rRNA binding"/>
    <property type="evidence" value="ECO:0007669"/>
    <property type="project" value="UniProtKB-UniRule"/>
</dbReference>
<dbReference type="GO" id="GO:0003735">
    <property type="term" value="F:structural constituent of ribosome"/>
    <property type="evidence" value="ECO:0007669"/>
    <property type="project" value="InterPro"/>
</dbReference>
<dbReference type="GO" id="GO:0006412">
    <property type="term" value="P:translation"/>
    <property type="evidence" value="ECO:0007669"/>
    <property type="project" value="UniProtKB-UniRule"/>
</dbReference>
<dbReference type="FunFam" id="3.30.1370.30:FF:000002">
    <property type="entry name" value="30S ribosomal protein S8"/>
    <property type="match status" value="1"/>
</dbReference>
<dbReference type="FunFam" id="3.30.1490.10:FF:000001">
    <property type="entry name" value="30S ribosomal protein S8"/>
    <property type="match status" value="1"/>
</dbReference>
<dbReference type="Gene3D" id="3.30.1370.30">
    <property type="match status" value="1"/>
</dbReference>
<dbReference type="Gene3D" id="3.30.1490.10">
    <property type="match status" value="1"/>
</dbReference>
<dbReference type="HAMAP" id="MF_01302_B">
    <property type="entry name" value="Ribosomal_uS8_B"/>
    <property type="match status" value="1"/>
</dbReference>
<dbReference type="InterPro" id="IPR000630">
    <property type="entry name" value="Ribosomal_uS8"/>
</dbReference>
<dbReference type="InterPro" id="IPR047863">
    <property type="entry name" value="Ribosomal_uS8_CS"/>
</dbReference>
<dbReference type="InterPro" id="IPR035987">
    <property type="entry name" value="Ribosomal_uS8_sf"/>
</dbReference>
<dbReference type="NCBIfam" id="NF001109">
    <property type="entry name" value="PRK00136.1"/>
    <property type="match status" value="1"/>
</dbReference>
<dbReference type="PANTHER" id="PTHR11758">
    <property type="entry name" value="40S RIBOSOMAL PROTEIN S15A"/>
    <property type="match status" value="1"/>
</dbReference>
<dbReference type="Pfam" id="PF00410">
    <property type="entry name" value="Ribosomal_S8"/>
    <property type="match status" value="1"/>
</dbReference>
<dbReference type="SUPFAM" id="SSF56047">
    <property type="entry name" value="Ribosomal protein S8"/>
    <property type="match status" value="1"/>
</dbReference>
<dbReference type="PROSITE" id="PS00053">
    <property type="entry name" value="RIBOSOMAL_S8"/>
    <property type="match status" value="1"/>
</dbReference>
<sequence length="132" mass="14424">MTMTDPVADMLTRLRNANSAYHDTVSMPSSKLKTRVAEILKAEGYIQDWREEEAEVGKKLTIDLKFGPQRERAIAGLRRISKPGLRVYAKSTNLPHVLGGLGIAILSTSSGLLTNQQAAKKGVGGEVLAYVW</sequence>
<comment type="function">
    <text evidence="1">One of the primary rRNA binding proteins, it binds directly to 16S rRNA central domain where it helps coordinate assembly of the platform of the 30S subunit.</text>
</comment>
<comment type="subunit">
    <text evidence="1">Part of the 30S ribosomal subunit. Contacts proteins S5 and S12.</text>
</comment>
<comment type="similarity">
    <text evidence="1">Belongs to the universal ribosomal protein uS8 family.</text>
</comment>